<organism>
    <name type="scientific">Rattus norvegicus</name>
    <name type="common">Rat</name>
    <dbReference type="NCBI Taxonomy" id="10116"/>
    <lineage>
        <taxon>Eukaryota</taxon>
        <taxon>Metazoa</taxon>
        <taxon>Chordata</taxon>
        <taxon>Craniata</taxon>
        <taxon>Vertebrata</taxon>
        <taxon>Euteleostomi</taxon>
        <taxon>Mammalia</taxon>
        <taxon>Eutheria</taxon>
        <taxon>Euarchontoglires</taxon>
        <taxon>Glires</taxon>
        <taxon>Rodentia</taxon>
        <taxon>Myomorpha</taxon>
        <taxon>Muroidea</taxon>
        <taxon>Muridae</taxon>
        <taxon>Murinae</taxon>
        <taxon>Rattus</taxon>
    </lineage>
</organism>
<name>CFA20_RAT</name>
<accession>Q499T7</accession>
<protein>
    <recommendedName>
        <fullName>Cilia- and flagella-associated protein 20</fullName>
    </recommendedName>
    <alternativeName>
        <fullName>Gene trap locus 3 protein homolog</fullName>
    </alternativeName>
</protein>
<sequence>MFKNTFQSGFLSILYSIGSKPLQIWDKKVRNGHIKRITDNDIQSLVLEIEGTNVSTTYITCPADPKKTLGIKLPFLVMIIKNLKKYFTFEVQVLDDKNVRRRFRASNYQSTTRVKPFICTMPMRLDDGWNQIQFNLSDFTRRAYDPCKLSYPKGLLLRQTLLRG</sequence>
<dbReference type="EMBL" id="BC099768">
    <property type="protein sequence ID" value="AAH99768.1"/>
    <property type="molecule type" value="mRNA"/>
</dbReference>
<dbReference type="RefSeq" id="NP_001033067.1">
    <property type="nucleotide sequence ID" value="NM_001037978.2"/>
</dbReference>
<dbReference type="SMR" id="Q499T7"/>
<dbReference type="FunCoup" id="Q499T7">
    <property type="interactions" value="1921"/>
</dbReference>
<dbReference type="STRING" id="10116.ENSRNOP00000058109"/>
<dbReference type="PhosphoSitePlus" id="Q499T7"/>
<dbReference type="PaxDb" id="10116-ENSRNOP00000058109"/>
<dbReference type="GeneID" id="307642"/>
<dbReference type="KEGG" id="rno:307642"/>
<dbReference type="UCSC" id="RGD:1308493">
    <property type="organism name" value="rat"/>
</dbReference>
<dbReference type="AGR" id="RGD:1308493"/>
<dbReference type="CTD" id="29105"/>
<dbReference type="RGD" id="1308493">
    <property type="gene designation" value="Cfap20"/>
</dbReference>
<dbReference type="eggNOG" id="KOG3213">
    <property type="taxonomic scope" value="Eukaryota"/>
</dbReference>
<dbReference type="HOGENOM" id="CLU_060610_1_1_1"/>
<dbReference type="InParanoid" id="Q499T7"/>
<dbReference type="PRO" id="PR:Q499T7"/>
<dbReference type="Proteomes" id="UP000002494">
    <property type="component" value="Unplaced"/>
</dbReference>
<dbReference type="GO" id="GO:0160112">
    <property type="term" value="C:axonemal B tubule inner sheath"/>
    <property type="evidence" value="ECO:0000266"/>
    <property type="project" value="RGD"/>
</dbReference>
<dbReference type="GO" id="GO:0005879">
    <property type="term" value="C:axonemal microtubule"/>
    <property type="evidence" value="ECO:0000250"/>
    <property type="project" value="UniProtKB"/>
</dbReference>
<dbReference type="GO" id="GO:0005814">
    <property type="term" value="C:centriole"/>
    <property type="evidence" value="ECO:0000250"/>
    <property type="project" value="UniProtKB"/>
</dbReference>
<dbReference type="GO" id="GO:0036064">
    <property type="term" value="C:ciliary basal body"/>
    <property type="evidence" value="ECO:0000250"/>
    <property type="project" value="UniProtKB"/>
</dbReference>
<dbReference type="GO" id="GO:0005929">
    <property type="term" value="C:cilium"/>
    <property type="evidence" value="ECO:0000250"/>
    <property type="project" value="UniProtKB"/>
</dbReference>
<dbReference type="GO" id="GO:0031514">
    <property type="term" value="C:motile cilium"/>
    <property type="evidence" value="ECO:0000318"/>
    <property type="project" value="GO_Central"/>
</dbReference>
<dbReference type="GO" id="GO:0005634">
    <property type="term" value="C:nucleus"/>
    <property type="evidence" value="ECO:0007669"/>
    <property type="project" value="UniProtKB-SubCell"/>
</dbReference>
<dbReference type="GO" id="GO:0036126">
    <property type="term" value="C:sperm flagellum"/>
    <property type="evidence" value="ECO:0000250"/>
    <property type="project" value="UniProtKB"/>
</dbReference>
<dbReference type="GO" id="GO:0060271">
    <property type="term" value="P:cilium assembly"/>
    <property type="evidence" value="ECO:0000250"/>
    <property type="project" value="UniProtKB"/>
</dbReference>
<dbReference type="GO" id="GO:0030317">
    <property type="term" value="P:flagellated sperm motility"/>
    <property type="evidence" value="ECO:0000250"/>
    <property type="project" value="UniProtKB"/>
</dbReference>
<dbReference type="GO" id="GO:2000147">
    <property type="term" value="P:positive regulation of cell motility"/>
    <property type="evidence" value="ECO:0000250"/>
    <property type="project" value="UniProtKB"/>
</dbReference>
<dbReference type="GO" id="GO:2000253">
    <property type="term" value="P:positive regulation of feeding behavior"/>
    <property type="evidence" value="ECO:0000250"/>
    <property type="project" value="UniProtKB"/>
</dbReference>
<dbReference type="GO" id="GO:0018095">
    <property type="term" value="P:protein polyglutamylation"/>
    <property type="evidence" value="ECO:0000250"/>
    <property type="project" value="UniProtKB"/>
</dbReference>
<dbReference type="GO" id="GO:0060296">
    <property type="term" value="P:regulation of cilium beat frequency involved in ciliary motility"/>
    <property type="evidence" value="ECO:0000250"/>
    <property type="project" value="UniProtKB"/>
</dbReference>
<dbReference type="InterPro" id="IPR040441">
    <property type="entry name" value="CFA20/CFAP20DC"/>
</dbReference>
<dbReference type="InterPro" id="IPR007714">
    <property type="entry name" value="CFA20_dom"/>
</dbReference>
<dbReference type="PANTHER" id="PTHR12458">
    <property type="entry name" value="ORF PROTEIN"/>
    <property type="match status" value="1"/>
</dbReference>
<dbReference type="Pfam" id="PF05018">
    <property type="entry name" value="CFA20_dom"/>
    <property type="match status" value="1"/>
</dbReference>
<keyword id="KW-0966">Cell projection</keyword>
<keyword id="KW-0969">Cilium</keyword>
<keyword id="KW-0963">Cytoplasm</keyword>
<keyword id="KW-0206">Cytoskeleton</keyword>
<keyword id="KW-0282">Flagellum</keyword>
<keyword id="KW-0493">Microtubule</keyword>
<keyword id="KW-0539">Nucleus</keyword>
<keyword id="KW-1185">Reference proteome</keyword>
<feature type="chain" id="PRO_0000296400" description="Cilia- and flagella-associated protein 20">
    <location>
        <begin position="1"/>
        <end position="164"/>
    </location>
</feature>
<evidence type="ECO:0000250" key="1">
    <source>
        <dbReference type="UniProtKB" id="Q6B857"/>
    </source>
</evidence>
<evidence type="ECO:0000250" key="2">
    <source>
        <dbReference type="UniProtKB" id="Q8BTU1"/>
    </source>
</evidence>
<evidence type="ECO:0000250" key="3">
    <source>
        <dbReference type="UniProtKB" id="Q9Y6A4"/>
    </source>
</evidence>
<evidence type="ECO:0000305" key="4"/>
<gene>
    <name type="primary">Cfap20</name>
    <name type="synonym">Gtl3</name>
</gene>
<reference key="1">
    <citation type="journal article" date="2004" name="Genome Res.">
        <title>The status, quality, and expansion of the NIH full-length cDNA project: the Mammalian Gene Collection (MGC).</title>
        <authorList>
            <consortium name="The MGC Project Team"/>
        </authorList>
    </citation>
    <scope>NUCLEOTIDE SEQUENCE [LARGE SCALE MRNA]</scope>
    <source>
        <tissue>Prostate</tissue>
    </source>
</reference>
<proteinExistence type="evidence at transcript level"/>
<comment type="function">
    <text evidence="3">Cilium- and flagellum-specific protein that plays a role in axonemal structure organization and motility. Microtubule inner protein (MIP) part of the dynein-decorated doublet microtubules (DMTs) in cilia axoneme, which is required for motile cilia beating. Involved in the regulation of the size and morphology of cilia. Required for axonemal microtubules polyglutamylation.</text>
</comment>
<comment type="subunit">
    <text evidence="2">Microtubule inner protein component of sperm flagellar doublet microtubules.</text>
</comment>
<comment type="subcellular location">
    <subcellularLocation>
        <location evidence="3">Nucleus</location>
    </subcellularLocation>
    <subcellularLocation>
        <location evidence="3">Cytoplasm</location>
        <location evidence="3">Cytoskeleton</location>
        <location evidence="3">Microtubule organizing center</location>
        <location evidence="3">Centrosome</location>
        <location evidence="3">Centriole</location>
    </subcellularLocation>
    <subcellularLocation>
        <location evidence="3">Cytoplasm</location>
        <location evidence="3">Cytoskeleton</location>
        <location evidence="3">Cilium basal body</location>
    </subcellularLocation>
    <subcellularLocation>
        <location evidence="1">Cytoplasm</location>
        <location evidence="1">Cytoskeleton</location>
        <location evidence="1">Cilium axoneme</location>
    </subcellularLocation>
    <subcellularLocation>
        <location evidence="2">Cytoplasm</location>
        <location evidence="2">Cytoskeleton</location>
        <location evidence="2">Flagellum axoneme</location>
    </subcellularLocation>
    <text evidence="1">Microtubule inner protein (MIP) part of the dynein-decorated doublet microtubules (DMTs) in cilia axoneme.</text>
</comment>
<comment type="similarity">
    <text evidence="4">Belongs to the CFAP20 family.</text>
</comment>